<proteinExistence type="evidence at protein level"/>
<sequence>MMRARVPLLLLGILFLASLSASFATSLREEEESQDNPFYFNSDNSWNTLFKNQYGHIRVLQRFDQQSKRLQNLEDYRLVEFRSKPETLLLPQQADAELLLVVRSGSAILVLVKPDDRREYFFLTQGDNPIFSDNQKIPAGTIFYLVNPDPKEDLRIIQLAMPVNNPQIHEFFLSSTEAQQSYLQEFSKHILEASFNSKFEEINRVLFEEEGQQEEGQQEGVIVNIDSEQIEELSKHAKSSSRKSHSKQDNTIGNEFGNLTERTDNSLNVLISSIEMKEGALFVPHYYSKAIVILVVNEGEAHVELVGPKGNKETLEFESYRAELSKDDVFVIPAAYPVAIKATSNVNFTGFGINANNNNRNLLAGKTDNVISSIGRALDGKDVLGLTFSGSGEEVMKLINKQSGSYFVDGHHHQQEQQKGSHQQEQQKGRKGAFVY</sequence>
<reference key="1">
    <citation type="journal article" date="1985" name="Nucleic Acids Res.">
        <title>Nucleotide sequences from phaseolin cDNA clones: the major storage proteins from Phaseolus vulgaris are encoded by two unique gene families.</title>
        <authorList>
            <person name="Slightom J.L."/>
            <person name="Drong R.F."/>
            <person name="Klassy R.C."/>
            <person name="Hoffman L.M."/>
        </authorList>
    </citation>
    <scope>NUCLEOTIDE SEQUENCE [MRNA]</scope>
    <source>
        <strain>cv. Tendergreen</strain>
        <tissue>Cotyledon</tissue>
    </source>
</reference>
<reference key="2">
    <citation type="journal article" date="1987" name="J. Biol. Chem.">
        <title>Structure, position, and biosynthesis of the high mannose and the complex oligosaccharide side chains of the bean storage protein phaseolin.</title>
        <authorList>
            <person name="Sturm A."/>
            <person name="Van Kuik J.A."/>
            <person name="Vliegenthart J.F.G."/>
            <person name="Chrispeels M.J."/>
        </authorList>
    </citation>
    <scope>GLYCOSYLATION AT ASN-258 AND ASN-347</scope>
    <scope>STRUCTURE OF CARBOHYDRATES</scope>
</reference>
<name>PHSA_PHAVU</name>
<evidence type="ECO:0000255" key="1"/>
<evidence type="ECO:0000256" key="2">
    <source>
        <dbReference type="SAM" id="MobiDB-lite"/>
    </source>
</evidence>
<evidence type="ECO:0000269" key="3">
    <source>
    </source>
</evidence>
<evidence type="ECO:0000305" key="4"/>
<protein>
    <recommendedName>
        <fullName>Phaseolin, alpha-type</fullName>
    </recommendedName>
</protein>
<feature type="signal peptide" evidence="1">
    <location>
        <begin position="1"/>
        <end position="24"/>
    </location>
</feature>
<feature type="chain" id="PRO_0000032194" description="Phaseolin, alpha-type">
    <location>
        <begin position="25"/>
        <end position="436"/>
    </location>
</feature>
<feature type="domain" description="Cupin type-1" evidence="1">
    <location>
        <begin position="245"/>
        <end position="396"/>
    </location>
</feature>
<feature type="region of interest" description="Disordered" evidence="2">
    <location>
        <begin position="233"/>
        <end position="257"/>
    </location>
</feature>
<feature type="region of interest" description="Disordered" evidence="2">
    <location>
        <begin position="411"/>
        <end position="436"/>
    </location>
</feature>
<feature type="compositionally biased region" description="Basic residues" evidence="2">
    <location>
        <begin position="236"/>
        <end position="245"/>
    </location>
</feature>
<feature type="compositionally biased region" description="Low complexity" evidence="2">
    <location>
        <begin position="417"/>
        <end position="426"/>
    </location>
</feature>
<feature type="glycosylation site" description="N-linked (GlcNAc...) (complex) asparagine; alternate" evidence="3">
    <location>
        <position position="258"/>
    </location>
</feature>
<feature type="glycosylation site" description="N-linked (GlcNAc...) (high mannose) asparagine; alternate" evidence="3">
    <location>
        <position position="258"/>
    </location>
</feature>
<feature type="glycosylation site" id="CAR_000077" description="N-linked (GlcNAc...) (high mannose) asparagine" evidence="3">
    <location>
        <position position="347"/>
    </location>
</feature>
<accession>P07219</accession>
<dbReference type="EMBL" id="X02980">
    <property type="protein sequence ID" value="CAA26718.1"/>
    <property type="molecule type" value="mRNA"/>
</dbReference>
<dbReference type="PIR" id="A23498">
    <property type="entry name" value="A23498"/>
</dbReference>
<dbReference type="RefSeq" id="XP_068490215.1">
    <property type="nucleotide sequence ID" value="XM_068634114.1"/>
</dbReference>
<dbReference type="SMR" id="P07219"/>
<dbReference type="Allergome" id="8837">
    <property type="allergen name" value="Pha v Phaseolin"/>
</dbReference>
<dbReference type="GlyConnect" id="493">
    <property type="glycosylation" value="2 N-Linked glycans (2 sites)"/>
</dbReference>
<dbReference type="iPTMnet" id="P07219"/>
<dbReference type="GeneID" id="137827793"/>
<dbReference type="eggNOG" id="ENOG502QQEP">
    <property type="taxonomic scope" value="Eukaryota"/>
</dbReference>
<dbReference type="GO" id="GO:0033095">
    <property type="term" value="C:aleurone grain"/>
    <property type="evidence" value="ECO:0007669"/>
    <property type="project" value="UniProtKB-SubCell"/>
</dbReference>
<dbReference type="GO" id="GO:0005773">
    <property type="term" value="C:vacuole"/>
    <property type="evidence" value="ECO:0007669"/>
    <property type="project" value="UniProtKB-SubCell"/>
</dbReference>
<dbReference type="GO" id="GO:0045735">
    <property type="term" value="F:nutrient reservoir activity"/>
    <property type="evidence" value="ECO:0007669"/>
    <property type="project" value="UniProtKB-KW"/>
</dbReference>
<dbReference type="CDD" id="cd02244">
    <property type="entry name" value="cupin_7S_vicilin-like_N"/>
    <property type="match status" value="1"/>
</dbReference>
<dbReference type="Gene3D" id="2.60.120.10">
    <property type="entry name" value="Jelly Rolls"/>
    <property type="match status" value="2"/>
</dbReference>
<dbReference type="InterPro" id="IPR006045">
    <property type="entry name" value="Cupin_1"/>
</dbReference>
<dbReference type="InterPro" id="IPR014710">
    <property type="entry name" value="RmlC-like_jellyroll"/>
</dbReference>
<dbReference type="InterPro" id="IPR011051">
    <property type="entry name" value="RmlC_Cupin_sf"/>
</dbReference>
<dbReference type="InterPro" id="IPR050253">
    <property type="entry name" value="Seed_Storage-Functional"/>
</dbReference>
<dbReference type="PANTHER" id="PTHR31189">
    <property type="entry name" value="OS03G0336100 PROTEIN-RELATED"/>
    <property type="match status" value="1"/>
</dbReference>
<dbReference type="PANTHER" id="PTHR31189:SF41">
    <property type="entry name" value="VICILIN C72"/>
    <property type="match status" value="1"/>
</dbReference>
<dbReference type="Pfam" id="PF00190">
    <property type="entry name" value="Cupin_1"/>
    <property type="match status" value="1"/>
</dbReference>
<dbReference type="SMART" id="SM00835">
    <property type="entry name" value="Cupin_1"/>
    <property type="match status" value="1"/>
</dbReference>
<dbReference type="SUPFAM" id="SSF51182">
    <property type="entry name" value="RmlC-like cupins"/>
    <property type="match status" value="2"/>
</dbReference>
<keyword id="KW-0325">Glycoprotein</keyword>
<keyword id="KW-0708">Seed storage protein</keyword>
<keyword id="KW-0732">Signal</keyword>
<keyword id="KW-0758">Storage protein</keyword>
<keyword id="KW-0926">Vacuole</keyword>
<organism>
    <name type="scientific">Phaseolus vulgaris</name>
    <name type="common">Kidney bean</name>
    <name type="synonym">French bean</name>
    <dbReference type="NCBI Taxonomy" id="3885"/>
    <lineage>
        <taxon>Eukaryota</taxon>
        <taxon>Viridiplantae</taxon>
        <taxon>Streptophyta</taxon>
        <taxon>Embryophyta</taxon>
        <taxon>Tracheophyta</taxon>
        <taxon>Spermatophyta</taxon>
        <taxon>Magnoliopsida</taxon>
        <taxon>eudicotyledons</taxon>
        <taxon>Gunneridae</taxon>
        <taxon>Pentapetalae</taxon>
        <taxon>rosids</taxon>
        <taxon>fabids</taxon>
        <taxon>Fabales</taxon>
        <taxon>Fabaceae</taxon>
        <taxon>Papilionoideae</taxon>
        <taxon>50 kb inversion clade</taxon>
        <taxon>NPAAA clade</taxon>
        <taxon>indigoferoid/millettioid clade</taxon>
        <taxon>Phaseoleae</taxon>
        <taxon>Phaseolus</taxon>
    </lineage>
</organism>
<comment type="function">
    <text>Major seed storage protein.</text>
</comment>
<comment type="subunit">
    <text>Homotrimer.</text>
</comment>
<comment type="subcellular location">
    <subcellularLocation>
        <location>Vacuole</location>
        <location>Aleurone grain</location>
    </subcellularLocation>
    <subcellularLocation>
        <location>Vacuole</location>
    </subcellularLocation>
    <text>Cotyledonary membrane-bound vacuolar protein bodies.</text>
</comment>
<comment type="PTM">
    <text evidence="3">N-glycosylated; glycans consist in Man9(GlcNAc)2 and Man7(GlcNAc)2 when dually glycosylated at Asn-258 and Asn-347, whereas it consists in Xyl-Man3(GlcNAc)2 when solely glycosylated at Asn-258.</text>
</comment>
<comment type="similarity">
    <text evidence="4">Belongs to the 7S seed storage protein family.</text>
</comment>